<proteinExistence type="inferred from homology"/>
<accession>P0AGM5</accession>
<accession>P20101</accession>
<accession>P76020</accession>
<accession>Q9R325</accession>
<reference key="1">
    <citation type="journal article" date="1995" name="J. Bacteriol.">
        <title>Expression of genes kdsA and kdsB involved in 3-deoxy-D-manno-octulosonic acid metabolism and biosynthesis of enterobacterial lipopolysaccharide is growth phase regulated primarily at the transcriptional level in Escherichia coli K-12.</title>
        <authorList>
            <person name="Strohmaier H."/>
            <person name="Remler P."/>
            <person name="Renner W."/>
            <person name="Hoegenauer G."/>
        </authorList>
    </citation>
    <scope>NUCLEOTIDE SEQUENCE [GENOMIC DNA]</scope>
    <source>
        <strain>K12</strain>
    </source>
</reference>
<reference key="2">
    <citation type="journal article" date="1996" name="DNA Res.">
        <title>A 718-kb DNA sequence of the Escherichia coli K-12 genome corresponding to the 12.7-28.0 min region on the linkage map.</title>
        <authorList>
            <person name="Oshima T."/>
            <person name="Aiba H."/>
            <person name="Baba T."/>
            <person name="Fujita K."/>
            <person name="Hayashi K."/>
            <person name="Honjo A."/>
            <person name="Ikemoto K."/>
            <person name="Inada T."/>
            <person name="Itoh T."/>
            <person name="Kajihara M."/>
            <person name="Kanai K."/>
            <person name="Kashimoto K."/>
            <person name="Kimura S."/>
            <person name="Kitagawa M."/>
            <person name="Makino K."/>
            <person name="Masuda S."/>
            <person name="Miki T."/>
            <person name="Mizobuchi K."/>
            <person name="Mori H."/>
            <person name="Motomura K."/>
            <person name="Nakamura Y."/>
            <person name="Nashimoto H."/>
            <person name="Nishio Y."/>
            <person name="Saito N."/>
            <person name="Sampei G."/>
            <person name="Seki Y."/>
            <person name="Tagami H."/>
            <person name="Takemoto K."/>
            <person name="Wada C."/>
            <person name="Yamamoto Y."/>
            <person name="Yano M."/>
            <person name="Horiuchi T."/>
        </authorList>
    </citation>
    <scope>NUCLEOTIDE SEQUENCE [LARGE SCALE GENOMIC DNA]</scope>
    <source>
        <strain>K12 / W3110 / ATCC 27325 / DSM 5911</strain>
    </source>
</reference>
<reference key="3">
    <citation type="journal article" date="1997" name="Science">
        <title>The complete genome sequence of Escherichia coli K-12.</title>
        <authorList>
            <person name="Blattner F.R."/>
            <person name="Plunkett G. III"/>
            <person name="Bloch C.A."/>
            <person name="Perna N.T."/>
            <person name="Burland V."/>
            <person name="Riley M."/>
            <person name="Collado-Vides J."/>
            <person name="Glasner J.D."/>
            <person name="Rode C.K."/>
            <person name="Mayhew G.F."/>
            <person name="Gregor J."/>
            <person name="Davis N.W."/>
            <person name="Kirkpatrick H.A."/>
            <person name="Goeden M.A."/>
            <person name="Rose D.J."/>
            <person name="Mau B."/>
            <person name="Shao Y."/>
        </authorList>
    </citation>
    <scope>NUCLEOTIDE SEQUENCE [LARGE SCALE GENOMIC DNA]</scope>
    <source>
        <strain>K12 / MG1655 / ATCC 47076</strain>
    </source>
</reference>
<reference key="4">
    <citation type="journal article" date="2006" name="Mol. Syst. Biol.">
        <title>Highly accurate genome sequences of Escherichia coli K-12 strains MG1655 and W3110.</title>
        <authorList>
            <person name="Hayashi K."/>
            <person name="Morooka N."/>
            <person name="Yamamoto Y."/>
            <person name="Fujita K."/>
            <person name="Isono K."/>
            <person name="Choi S."/>
            <person name="Ohtsubo E."/>
            <person name="Baba T."/>
            <person name="Wanner B.L."/>
            <person name="Mori H."/>
            <person name="Horiuchi T."/>
        </authorList>
    </citation>
    <scope>NUCLEOTIDE SEQUENCE [LARGE SCALE GENOMIC DNA]</scope>
    <source>
        <strain>K12 / W3110 / ATCC 27325 / DSM 5911</strain>
    </source>
</reference>
<reference key="5">
    <citation type="journal article" date="1995" name="Gene">
        <title>Cloning and sequencing of a previously unidentified gene that is involved in the biosynthesis of heme in Escherichia coli.</title>
        <authorList>
            <person name="Nakayashiki T."/>
            <person name="Nishimura K."/>
            <person name="Inokuchi H."/>
        </authorList>
    </citation>
    <scope>NUCLEOTIDE SEQUENCE [GENOMIC DNA] OF 1-206</scope>
    <source>
        <strain>K12</strain>
    </source>
</reference>
<reference key="6">
    <citation type="journal article" date="1987" name="Mol. Gen. Genet.">
        <title>The kdsA gene coding for 3-deoxy-D-manno-octulosonic acid 8-phosphate synthetase is part of an operon in Escherichia coli.</title>
        <authorList>
            <person name="Woisetschlaeger M."/>
            <person name="Hoegenauer G."/>
        </authorList>
    </citation>
    <scope>NUCLEOTIDE SEQUENCE [GENOMIC DNA] OF 124-269</scope>
</reference>
<protein>
    <recommendedName>
        <fullName>UPF0162 protein YchA</fullName>
    </recommendedName>
    <alternativeName>
        <fullName>Protein SirB1</fullName>
    </alternativeName>
</protein>
<comment type="similarity">
    <text evidence="1">Belongs to the UPF0162 family.</text>
</comment>
<comment type="sequence caution" evidence="1">
    <conflict type="frameshift">
        <sequence resource="EMBL-CDS" id="BAA05916"/>
    </conflict>
</comment>
<keyword id="KW-1185">Reference proteome</keyword>
<evidence type="ECO:0000305" key="1"/>
<sequence>MRSLADFEFNKAPLCEGMILACEAIRRDFPSQDVYDELERLVSLAKEEISQLLPLEEQLEKLIALFYGDWGFKASRGVYRLSDALWLDQVLKNRQGSAVSLGAVLLWVANRLDLPLLPVIFPTQLILRIECPDGEIWLINPFNGESLSEHMLDVWLKGNISPSAELFYEDLDEADNIEVIRKLLDTLKASLMEENQMELALRTSEALLQFNPEDPYEIRDRGLIYAQLDCEHVALNDLSYFVEQCPEDPISEMIRAQINNIAHKHIVLH</sequence>
<gene>
    <name type="primary">ychA</name>
    <name type="synonym">sirB1</name>
    <name type="ordered locus">b1214</name>
    <name type="ordered locus">JW1205</name>
</gene>
<dbReference type="EMBL" id="U18555">
    <property type="protein sequence ID" value="AAC43440.1"/>
    <property type="molecule type" value="Genomic_DNA"/>
</dbReference>
<dbReference type="EMBL" id="U00096">
    <property type="protein sequence ID" value="AAC74298.1"/>
    <property type="molecule type" value="Genomic_DNA"/>
</dbReference>
<dbReference type="EMBL" id="AP009048">
    <property type="protein sequence ID" value="BAA36072.1"/>
    <property type="molecule type" value="Genomic_DNA"/>
</dbReference>
<dbReference type="EMBL" id="D28567">
    <property type="protein sequence ID" value="BAA05916.1"/>
    <property type="status" value="ALT_FRAME"/>
    <property type="molecule type" value="Genomic_DNA"/>
</dbReference>
<dbReference type="EMBL" id="X05552">
    <property type="protein sequence ID" value="CAA29066.1"/>
    <property type="molecule type" value="Genomic_DNA"/>
</dbReference>
<dbReference type="PIR" id="I83572">
    <property type="entry name" value="I83572"/>
</dbReference>
<dbReference type="RefSeq" id="NP_415732.1">
    <property type="nucleotide sequence ID" value="NC_000913.3"/>
</dbReference>
<dbReference type="RefSeq" id="WP_001257044.1">
    <property type="nucleotide sequence ID" value="NZ_STEB01000023.1"/>
</dbReference>
<dbReference type="SMR" id="P0AGM5"/>
<dbReference type="BioGRID" id="4260115">
    <property type="interactions" value="19"/>
</dbReference>
<dbReference type="DIP" id="DIP-35939N"/>
<dbReference type="FunCoup" id="P0AGM5">
    <property type="interactions" value="22"/>
</dbReference>
<dbReference type="IntAct" id="P0AGM5">
    <property type="interactions" value="5"/>
</dbReference>
<dbReference type="STRING" id="511145.b1214"/>
<dbReference type="PaxDb" id="511145-b1214"/>
<dbReference type="EnsemblBacteria" id="AAC74298">
    <property type="protein sequence ID" value="AAC74298"/>
    <property type="gene ID" value="b1214"/>
</dbReference>
<dbReference type="GeneID" id="93775279"/>
<dbReference type="GeneID" id="945784"/>
<dbReference type="KEGG" id="ecj:JW1205"/>
<dbReference type="KEGG" id="eco:b1214"/>
<dbReference type="KEGG" id="ecoc:C3026_07130"/>
<dbReference type="PATRIC" id="fig|511145.12.peg.1262"/>
<dbReference type="EchoBASE" id="EB1231"/>
<dbReference type="eggNOG" id="COG2912">
    <property type="taxonomic scope" value="Bacteria"/>
</dbReference>
<dbReference type="HOGENOM" id="CLU_063810_0_0_6"/>
<dbReference type="InParanoid" id="P0AGM5"/>
<dbReference type="OMA" id="WIAAEHD"/>
<dbReference type="OrthoDB" id="232498at2"/>
<dbReference type="PhylomeDB" id="P0AGM5"/>
<dbReference type="BioCyc" id="EcoCyc:EG11251-MONOMER"/>
<dbReference type="PRO" id="PR:P0AGM5"/>
<dbReference type="Proteomes" id="UP000000625">
    <property type="component" value="Chromosome"/>
</dbReference>
<dbReference type="InterPro" id="IPR032698">
    <property type="entry name" value="SirB1_N"/>
</dbReference>
<dbReference type="NCBIfam" id="NF008188">
    <property type="entry name" value="PRK10941.1"/>
    <property type="match status" value="1"/>
</dbReference>
<dbReference type="PANTHER" id="PTHR31350:SF21">
    <property type="entry name" value="F-BOX ONLY PROTEIN 21"/>
    <property type="match status" value="1"/>
</dbReference>
<dbReference type="PANTHER" id="PTHR31350">
    <property type="entry name" value="SI:DKEY-261L7.2"/>
    <property type="match status" value="1"/>
</dbReference>
<dbReference type="Pfam" id="PF13371">
    <property type="entry name" value="TPR_9"/>
    <property type="match status" value="1"/>
</dbReference>
<dbReference type="Pfam" id="PF13369">
    <property type="entry name" value="Transglut_core2"/>
    <property type="match status" value="1"/>
</dbReference>
<feature type="chain" id="PRO_0000202377" description="UPF0162 protein YchA">
    <location>
        <begin position="1"/>
        <end position="269"/>
    </location>
</feature>
<organism>
    <name type="scientific">Escherichia coli (strain K12)</name>
    <dbReference type="NCBI Taxonomy" id="83333"/>
    <lineage>
        <taxon>Bacteria</taxon>
        <taxon>Pseudomonadati</taxon>
        <taxon>Pseudomonadota</taxon>
        <taxon>Gammaproteobacteria</taxon>
        <taxon>Enterobacterales</taxon>
        <taxon>Enterobacteriaceae</taxon>
        <taxon>Escherichia</taxon>
    </lineage>
</organism>
<name>SIRB1_ECOLI</name>